<protein>
    <recommendedName>
        <fullName evidence="4">Alpha-ketoglutarate-dependent dioxygenase esdpJ</fullName>
        <ecNumber evidence="3">1.14.11.-</ecNumber>
    </recommendedName>
    <alternativeName>
        <fullName evidence="4">Shearone I biosynthesis cluster protein J</fullName>
    </alternativeName>
</protein>
<organism>
    <name type="scientific">Penicillium shearii</name>
    <name type="common">Eupenicillium shearii</name>
    <dbReference type="NCBI Taxonomy" id="904690"/>
    <lineage>
        <taxon>Eukaryota</taxon>
        <taxon>Fungi</taxon>
        <taxon>Dikarya</taxon>
        <taxon>Ascomycota</taxon>
        <taxon>Pezizomycotina</taxon>
        <taxon>Eurotiomycetes</taxon>
        <taxon>Eurotiomycetidae</taxon>
        <taxon>Eurotiales</taxon>
        <taxon>Aspergillaceae</taxon>
        <taxon>Penicillium</taxon>
    </lineage>
</organism>
<proteinExistence type="inferred from homology"/>
<gene>
    <name evidence="4" type="primary">esdpJ</name>
</gene>
<sequence length="376" mass="42366">MGSISQSHKRQPLELQGHLASFKAFDCTPVLGTEFPDAKLAEWLQAPNADDLIRDLAITISQRGVVIFRSQVDLTDELQKTLVQKLGELTGKPSDSTWHIHPLAKYNPTGDSTRHLITTDPKNKPAEDRFRNQAEQPMGVRAAWHTDISYEPNPADYSCLKMVQLPTNGGGKWPQLPILTPVERHGTMANAKCANSIEQSDTLYASSYEVLDKISPAYRKFLETLTATFAQPRYNQSSQEKKSEIHVEPRGSPNNVGSDLSAIHPVVRTNPVTGWKGLYGAGMHTRRFNEVTADESRRLADWLLQMIVENHDLQFRHSWKNPYDVAIWDNRAVFHAGIMDYKGQGHRTGHRYVGVGEQPYLDPESKTRREALGEFN</sequence>
<keyword id="KW-0223">Dioxygenase</keyword>
<keyword id="KW-0408">Iron</keyword>
<keyword id="KW-0479">Metal-binding</keyword>
<keyword id="KW-0560">Oxidoreductase</keyword>
<evidence type="ECO:0000250" key="1">
    <source>
        <dbReference type="UniProtKB" id="P37610"/>
    </source>
</evidence>
<evidence type="ECO:0000256" key="2">
    <source>
        <dbReference type="SAM" id="MobiDB-lite"/>
    </source>
</evidence>
<evidence type="ECO:0000269" key="3">
    <source>
    </source>
</evidence>
<evidence type="ECO:0000303" key="4">
    <source>
    </source>
</evidence>
<evidence type="ECO:0000305" key="5"/>
<reference key="1">
    <citation type="journal article" date="2022" name="J. Nat. Prod.">
        <title>Synthetic biology-based discovery of diterpenoid pyrones from the genome of Eupenicillium shearii.</title>
        <authorList>
            <person name="Morishita Y."/>
            <person name="Tsukada K."/>
            <person name="Murakami K."/>
            <person name="Irie K."/>
            <person name="Asai T."/>
        </authorList>
    </citation>
    <scope>NUCLEOTIDE SEQUENCE [GENOMIC DNA]</scope>
    <scope>FUNCTION</scope>
    <source>
        <strain>IFM 42152</strain>
    </source>
</reference>
<comment type="function">
    <text evidence="3">Alpha-ketoglutarate-dependent dioxygenas; part of the cluster that mediates the biosynthesis of shearones, diterpenoid pyrones (DPs) which are structurally diverse meroterpenoids consisting of a diterpene linked by a pyrone, and which may exhibit a range of bioactivities (PubMed:35057611). The alpha-ketoglutarate-dependent dioxygenase esdpJ seems not to be involved in this pathway (PubMed:35057611). The molecular scaffold is commonly biosynthesized by a series of enzymes including the non-reducing polyketide synthase (NR-PKS) esdpA that generates an alpha-pyrone; the prenyltransferase esdpC that attaches a geranylgeranyl pyrophosphate (GGPP) produced by the GGPP synthase (GGPPS) esdpD onto the pyrone unit; the FAD-dependent monooxygenase esdpE that converts an olefin on the diterpene unit into an epoxide; and the terpene cyclase esdpB that catalyzes the cyclization reactions to give the molecular backbone shearone A (PubMed:35057611). In the modification steps, esdpF oxidizes the hydroxy group to a ketone at C-3 and esdpG then attaches hydroxy groups at both C-11 and C-12. After that, esdpI hydroxylates at C-20 and esdpH hydroxylates at C-6'. The ether bridge is generated by nucleophilic attack of the hydroxy group at C-20 to the carbonyl carbon at C-3. EsdpH can also functions prior to esdpI. The different combinations of these modification enzymes lead to the production of diverse shearone derivatives, shearone I being the end product of the pathway (PubMed:35057611).</text>
</comment>
<comment type="cofactor">
    <cofactor evidence="1">
        <name>Fe(2+)</name>
        <dbReference type="ChEBI" id="CHEBI:29033"/>
    </cofactor>
    <text evidence="1">Binds 1 Fe(2+) ion per subunit.</text>
</comment>
<comment type="similarity">
    <text evidence="5">Belongs to the TfdA dioxygenase family.</text>
</comment>
<dbReference type="EC" id="1.14.11.-" evidence="3"/>
<dbReference type="EMBL" id="LC600199">
    <property type="protein sequence ID" value="BCP96880.1"/>
    <property type="molecule type" value="Genomic_DNA"/>
</dbReference>
<dbReference type="SMR" id="A0A8D5RZ52"/>
<dbReference type="GO" id="GO:0005737">
    <property type="term" value="C:cytoplasm"/>
    <property type="evidence" value="ECO:0007669"/>
    <property type="project" value="TreeGrafter"/>
</dbReference>
<dbReference type="GO" id="GO:0016706">
    <property type="term" value="F:2-oxoglutarate-dependent dioxygenase activity"/>
    <property type="evidence" value="ECO:0007669"/>
    <property type="project" value="TreeGrafter"/>
</dbReference>
<dbReference type="GO" id="GO:0046872">
    <property type="term" value="F:metal ion binding"/>
    <property type="evidence" value="ECO:0007669"/>
    <property type="project" value="UniProtKB-KW"/>
</dbReference>
<dbReference type="Gene3D" id="3.60.130.10">
    <property type="entry name" value="Clavaminate synthase-like"/>
    <property type="match status" value="1"/>
</dbReference>
<dbReference type="InterPro" id="IPR051323">
    <property type="entry name" value="AtsK-like"/>
</dbReference>
<dbReference type="InterPro" id="IPR042098">
    <property type="entry name" value="TauD-like_sf"/>
</dbReference>
<dbReference type="InterPro" id="IPR003819">
    <property type="entry name" value="TauD/TfdA-like"/>
</dbReference>
<dbReference type="PANTHER" id="PTHR30468">
    <property type="entry name" value="ALPHA-KETOGLUTARATE-DEPENDENT SULFONATE DIOXYGENASE"/>
    <property type="match status" value="1"/>
</dbReference>
<dbReference type="PANTHER" id="PTHR30468:SF10">
    <property type="entry name" value="TAUD_TFDA-LIKE DOMAIN-CONTAINING PROTEIN"/>
    <property type="match status" value="1"/>
</dbReference>
<dbReference type="Pfam" id="PF02668">
    <property type="entry name" value="TauD"/>
    <property type="match status" value="1"/>
</dbReference>
<dbReference type="SUPFAM" id="SSF51197">
    <property type="entry name" value="Clavaminate synthase-like"/>
    <property type="match status" value="1"/>
</dbReference>
<feature type="chain" id="PRO_0000461036" description="Alpha-ketoglutarate-dependent dioxygenase esdpJ">
    <location>
        <begin position="1"/>
        <end position="376"/>
    </location>
</feature>
<feature type="region of interest" description="Disordered" evidence="2">
    <location>
        <begin position="234"/>
        <end position="260"/>
    </location>
</feature>
<feature type="region of interest" description="Disordered" evidence="2">
    <location>
        <begin position="354"/>
        <end position="376"/>
    </location>
</feature>
<feature type="compositionally biased region" description="Basic and acidic residues" evidence="2">
    <location>
        <begin position="239"/>
        <end position="249"/>
    </location>
</feature>
<feature type="compositionally biased region" description="Basic and acidic residues" evidence="2">
    <location>
        <begin position="363"/>
        <end position="376"/>
    </location>
</feature>
<feature type="binding site" evidence="1">
    <location>
        <position position="145"/>
    </location>
    <ligand>
        <name>Fe cation</name>
        <dbReference type="ChEBI" id="CHEBI:24875"/>
        <note>catalytic</note>
    </ligand>
</feature>
<feature type="binding site" evidence="1">
    <location>
        <position position="147"/>
    </location>
    <ligand>
        <name>Fe cation</name>
        <dbReference type="ChEBI" id="CHEBI:24875"/>
        <note>catalytic</note>
    </ligand>
</feature>
<feature type="binding site" evidence="1">
    <location>
        <position position="202"/>
    </location>
    <ligand>
        <name>2-oxoglutarate</name>
        <dbReference type="ChEBI" id="CHEBI:16810"/>
    </ligand>
</feature>
<feature type="binding site" evidence="1">
    <location>
        <position position="335"/>
    </location>
    <ligand>
        <name>Fe cation</name>
        <dbReference type="ChEBI" id="CHEBI:24875"/>
        <note>catalytic</note>
    </ligand>
</feature>
<feature type="binding site" evidence="1">
    <location>
        <position position="347"/>
    </location>
    <ligand>
        <name>2-oxoglutarate</name>
        <dbReference type="ChEBI" id="CHEBI:16810"/>
    </ligand>
</feature>
<feature type="binding site" evidence="1">
    <location>
        <position position="351"/>
    </location>
    <ligand>
        <name>2-oxoglutarate</name>
        <dbReference type="ChEBI" id="CHEBI:16810"/>
    </ligand>
</feature>
<accession>A0A8D5RZ52</accession>
<name>ESDPJ_PENSH</name>